<evidence type="ECO:0000255" key="1">
    <source>
        <dbReference type="HAMAP-Rule" id="MF_01631"/>
    </source>
</evidence>
<dbReference type="EC" id="2.7.7.23" evidence="1"/>
<dbReference type="EC" id="2.3.1.157" evidence="1"/>
<dbReference type="EMBL" id="CR543861">
    <property type="protein sequence ID" value="CAG70216.1"/>
    <property type="molecule type" value="Genomic_DNA"/>
</dbReference>
<dbReference type="RefSeq" id="WP_004923178.1">
    <property type="nucleotide sequence ID" value="NC_005966.1"/>
</dbReference>
<dbReference type="SMR" id="Q6F6U9"/>
<dbReference type="STRING" id="202950.GCA_001485005_01641"/>
<dbReference type="GeneID" id="45235748"/>
<dbReference type="KEGG" id="aci:ACIAD3575"/>
<dbReference type="eggNOG" id="COG1207">
    <property type="taxonomic scope" value="Bacteria"/>
</dbReference>
<dbReference type="HOGENOM" id="CLU_029499_15_2_6"/>
<dbReference type="OrthoDB" id="9775031at2"/>
<dbReference type="BioCyc" id="ASP62977:ACIAD_RS16175-MONOMER"/>
<dbReference type="UniPathway" id="UPA00113">
    <property type="reaction ID" value="UER00532"/>
</dbReference>
<dbReference type="UniPathway" id="UPA00113">
    <property type="reaction ID" value="UER00533"/>
</dbReference>
<dbReference type="UniPathway" id="UPA00973"/>
<dbReference type="Proteomes" id="UP000000430">
    <property type="component" value="Chromosome"/>
</dbReference>
<dbReference type="GO" id="GO:0005737">
    <property type="term" value="C:cytoplasm"/>
    <property type="evidence" value="ECO:0007669"/>
    <property type="project" value="UniProtKB-SubCell"/>
</dbReference>
<dbReference type="GO" id="GO:0016020">
    <property type="term" value="C:membrane"/>
    <property type="evidence" value="ECO:0007669"/>
    <property type="project" value="GOC"/>
</dbReference>
<dbReference type="GO" id="GO:0019134">
    <property type="term" value="F:glucosamine-1-phosphate N-acetyltransferase activity"/>
    <property type="evidence" value="ECO:0007669"/>
    <property type="project" value="UniProtKB-UniRule"/>
</dbReference>
<dbReference type="GO" id="GO:0000287">
    <property type="term" value="F:magnesium ion binding"/>
    <property type="evidence" value="ECO:0007669"/>
    <property type="project" value="UniProtKB-UniRule"/>
</dbReference>
<dbReference type="GO" id="GO:0003977">
    <property type="term" value="F:UDP-N-acetylglucosamine diphosphorylase activity"/>
    <property type="evidence" value="ECO:0007669"/>
    <property type="project" value="UniProtKB-UniRule"/>
</dbReference>
<dbReference type="GO" id="GO:0000902">
    <property type="term" value="P:cell morphogenesis"/>
    <property type="evidence" value="ECO:0007669"/>
    <property type="project" value="UniProtKB-UniRule"/>
</dbReference>
<dbReference type="GO" id="GO:0071555">
    <property type="term" value="P:cell wall organization"/>
    <property type="evidence" value="ECO:0007669"/>
    <property type="project" value="UniProtKB-KW"/>
</dbReference>
<dbReference type="GO" id="GO:0009245">
    <property type="term" value="P:lipid A biosynthetic process"/>
    <property type="evidence" value="ECO:0007669"/>
    <property type="project" value="UniProtKB-UniRule"/>
</dbReference>
<dbReference type="GO" id="GO:0009252">
    <property type="term" value="P:peptidoglycan biosynthetic process"/>
    <property type="evidence" value="ECO:0007669"/>
    <property type="project" value="UniProtKB-UniRule"/>
</dbReference>
<dbReference type="GO" id="GO:0008360">
    <property type="term" value="P:regulation of cell shape"/>
    <property type="evidence" value="ECO:0007669"/>
    <property type="project" value="UniProtKB-KW"/>
</dbReference>
<dbReference type="GO" id="GO:0006048">
    <property type="term" value="P:UDP-N-acetylglucosamine biosynthetic process"/>
    <property type="evidence" value="ECO:0007669"/>
    <property type="project" value="UniProtKB-UniPathway"/>
</dbReference>
<dbReference type="CDD" id="cd02540">
    <property type="entry name" value="GT2_GlmU_N_bac"/>
    <property type="match status" value="1"/>
</dbReference>
<dbReference type="CDD" id="cd03353">
    <property type="entry name" value="LbH_GlmU_C"/>
    <property type="match status" value="1"/>
</dbReference>
<dbReference type="Gene3D" id="2.160.10.10">
    <property type="entry name" value="Hexapeptide repeat proteins"/>
    <property type="match status" value="1"/>
</dbReference>
<dbReference type="Gene3D" id="3.90.550.10">
    <property type="entry name" value="Spore Coat Polysaccharide Biosynthesis Protein SpsA, Chain A"/>
    <property type="match status" value="1"/>
</dbReference>
<dbReference type="HAMAP" id="MF_01631">
    <property type="entry name" value="GlmU"/>
    <property type="match status" value="1"/>
</dbReference>
<dbReference type="InterPro" id="IPR005882">
    <property type="entry name" value="Bifunctional_GlmU"/>
</dbReference>
<dbReference type="InterPro" id="IPR050065">
    <property type="entry name" value="GlmU-like"/>
</dbReference>
<dbReference type="InterPro" id="IPR038009">
    <property type="entry name" value="GlmU_C_LbH"/>
</dbReference>
<dbReference type="InterPro" id="IPR001451">
    <property type="entry name" value="Hexapep"/>
</dbReference>
<dbReference type="InterPro" id="IPR018357">
    <property type="entry name" value="Hexapep_transf_CS"/>
</dbReference>
<dbReference type="InterPro" id="IPR025877">
    <property type="entry name" value="MobA-like_NTP_Trfase"/>
</dbReference>
<dbReference type="InterPro" id="IPR029044">
    <property type="entry name" value="Nucleotide-diphossugar_trans"/>
</dbReference>
<dbReference type="InterPro" id="IPR011004">
    <property type="entry name" value="Trimer_LpxA-like_sf"/>
</dbReference>
<dbReference type="NCBIfam" id="TIGR01173">
    <property type="entry name" value="glmU"/>
    <property type="match status" value="1"/>
</dbReference>
<dbReference type="NCBIfam" id="NF010933">
    <property type="entry name" value="PRK14353.1"/>
    <property type="match status" value="1"/>
</dbReference>
<dbReference type="PANTHER" id="PTHR43584:SF3">
    <property type="entry name" value="BIFUNCTIONAL PROTEIN GLMU"/>
    <property type="match status" value="1"/>
</dbReference>
<dbReference type="PANTHER" id="PTHR43584">
    <property type="entry name" value="NUCLEOTIDYL TRANSFERASE"/>
    <property type="match status" value="1"/>
</dbReference>
<dbReference type="Pfam" id="PF00132">
    <property type="entry name" value="Hexapep"/>
    <property type="match status" value="3"/>
</dbReference>
<dbReference type="Pfam" id="PF12804">
    <property type="entry name" value="NTP_transf_3"/>
    <property type="match status" value="1"/>
</dbReference>
<dbReference type="SUPFAM" id="SSF53448">
    <property type="entry name" value="Nucleotide-diphospho-sugar transferases"/>
    <property type="match status" value="1"/>
</dbReference>
<dbReference type="SUPFAM" id="SSF51161">
    <property type="entry name" value="Trimeric LpxA-like enzymes"/>
    <property type="match status" value="1"/>
</dbReference>
<dbReference type="PROSITE" id="PS00101">
    <property type="entry name" value="HEXAPEP_TRANSFERASES"/>
    <property type="match status" value="1"/>
</dbReference>
<proteinExistence type="inferred from homology"/>
<accession>Q6F6U9</accession>
<gene>
    <name evidence="1" type="primary">glmU</name>
    <name type="ordered locus">ACIAD3575</name>
</gene>
<name>GLMU_ACIAD</name>
<protein>
    <recommendedName>
        <fullName evidence="1">Bifunctional protein GlmU</fullName>
    </recommendedName>
    <domain>
        <recommendedName>
            <fullName evidence="1">UDP-N-acetylglucosamine pyrophosphorylase</fullName>
            <ecNumber evidence="1">2.7.7.23</ecNumber>
        </recommendedName>
        <alternativeName>
            <fullName evidence="1">N-acetylglucosamine-1-phosphate uridyltransferase</fullName>
        </alternativeName>
    </domain>
    <domain>
        <recommendedName>
            <fullName evidence="1">Glucosamine-1-phosphate N-acetyltransferase</fullName>
            <ecNumber evidence="1">2.3.1.157</ecNumber>
        </recommendedName>
    </domain>
</protein>
<feature type="chain" id="PRO_0000233720" description="Bifunctional protein GlmU">
    <location>
        <begin position="1"/>
        <end position="454"/>
    </location>
</feature>
<feature type="region of interest" description="Pyrophosphorylase" evidence="1">
    <location>
        <begin position="1"/>
        <end position="226"/>
    </location>
</feature>
<feature type="region of interest" description="Linker" evidence="1">
    <location>
        <begin position="227"/>
        <end position="247"/>
    </location>
</feature>
<feature type="region of interest" description="N-acetyltransferase" evidence="1">
    <location>
        <begin position="248"/>
        <end position="454"/>
    </location>
</feature>
<feature type="active site" description="Proton acceptor" evidence="1">
    <location>
        <position position="360"/>
    </location>
</feature>
<feature type="binding site" evidence="1">
    <location>
        <begin position="8"/>
        <end position="11"/>
    </location>
    <ligand>
        <name>UDP-N-acetyl-alpha-D-glucosamine</name>
        <dbReference type="ChEBI" id="CHEBI:57705"/>
    </ligand>
</feature>
<feature type="binding site" evidence="1">
    <location>
        <position position="22"/>
    </location>
    <ligand>
        <name>UDP-N-acetyl-alpha-D-glucosamine</name>
        <dbReference type="ChEBI" id="CHEBI:57705"/>
    </ligand>
</feature>
<feature type="binding site" evidence="1">
    <location>
        <position position="73"/>
    </location>
    <ligand>
        <name>UDP-N-acetyl-alpha-D-glucosamine</name>
        <dbReference type="ChEBI" id="CHEBI:57705"/>
    </ligand>
</feature>
<feature type="binding site" evidence="1">
    <location>
        <begin position="78"/>
        <end position="79"/>
    </location>
    <ligand>
        <name>UDP-N-acetyl-alpha-D-glucosamine</name>
        <dbReference type="ChEBI" id="CHEBI:57705"/>
    </ligand>
</feature>
<feature type="binding site" evidence="1">
    <location>
        <begin position="100"/>
        <end position="102"/>
    </location>
    <ligand>
        <name>UDP-N-acetyl-alpha-D-glucosamine</name>
        <dbReference type="ChEBI" id="CHEBI:57705"/>
    </ligand>
</feature>
<feature type="binding site" evidence="1">
    <location>
        <position position="102"/>
    </location>
    <ligand>
        <name>Mg(2+)</name>
        <dbReference type="ChEBI" id="CHEBI:18420"/>
    </ligand>
</feature>
<feature type="binding site" evidence="1">
    <location>
        <position position="137"/>
    </location>
    <ligand>
        <name>UDP-N-acetyl-alpha-D-glucosamine</name>
        <dbReference type="ChEBI" id="CHEBI:57705"/>
    </ligand>
</feature>
<feature type="binding site" evidence="1">
    <location>
        <position position="151"/>
    </location>
    <ligand>
        <name>UDP-N-acetyl-alpha-D-glucosamine</name>
        <dbReference type="ChEBI" id="CHEBI:57705"/>
    </ligand>
</feature>
<feature type="binding site" evidence="1">
    <location>
        <position position="166"/>
    </location>
    <ligand>
        <name>UDP-N-acetyl-alpha-D-glucosamine</name>
        <dbReference type="ChEBI" id="CHEBI:57705"/>
    </ligand>
</feature>
<feature type="binding site" evidence="1">
    <location>
        <position position="224"/>
    </location>
    <ligand>
        <name>Mg(2+)</name>
        <dbReference type="ChEBI" id="CHEBI:18420"/>
    </ligand>
</feature>
<feature type="binding site" evidence="1">
    <location>
        <position position="224"/>
    </location>
    <ligand>
        <name>UDP-N-acetyl-alpha-D-glucosamine</name>
        <dbReference type="ChEBI" id="CHEBI:57705"/>
    </ligand>
</feature>
<feature type="binding site" evidence="1">
    <location>
        <position position="330"/>
    </location>
    <ligand>
        <name>UDP-N-acetyl-alpha-D-glucosamine</name>
        <dbReference type="ChEBI" id="CHEBI:57705"/>
    </ligand>
</feature>
<feature type="binding site" evidence="1">
    <location>
        <position position="348"/>
    </location>
    <ligand>
        <name>UDP-N-acetyl-alpha-D-glucosamine</name>
        <dbReference type="ChEBI" id="CHEBI:57705"/>
    </ligand>
</feature>
<feature type="binding site" evidence="1">
    <location>
        <position position="363"/>
    </location>
    <ligand>
        <name>UDP-N-acetyl-alpha-D-glucosamine</name>
        <dbReference type="ChEBI" id="CHEBI:57705"/>
    </ligand>
</feature>
<feature type="binding site" evidence="1">
    <location>
        <position position="374"/>
    </location>
    <ligand>
        <name>UDP-N-acetyl-alpha-D-glucosamine</name>
        <dbReference type="ChEBI" id="CHEBI:57705"/>
    </ligand>
</feature>
<feature type="binding site" evidence="1">
    <location>
        <position position="377"/>
    </location>
    <ligand>
        <name>acetyl-CoA</name>
        <dbReference type="ChEBI" id="CHEBI:57288"/>
    </ligand>
</feature>
<feature type="binding site" evidence="1">
    <location>
        <begin position="383"/>
        <end position="384"/>
    </location>
    <ligand>
        <name>acetyl-CoA</name>
        <dbReference type="ChEBI" id="CHEBI:57288"/>
    </ligand>
</feature>
<feature type="binding site" evidence="1">
    <location>
        <position position="402"/>
    </location>
    <ligand>
        <name>acetyl-CoA</name>
        <dbReference type="ChEBI" id="CHEBI:57288"/>
    </ligand>
</feature>
<feature type="binding site" evidence="1">
    <location>
        <position position="420"/>
    </location>
    <ligand>
        <name>acetyl-CoA</name>
        <dbReference type="ChEBI" id="CHEBI:57288"/>
    </ligand>
</feature>
<feature type="binding site" evidence="1">
    <location>
        <position position="437"/>
    </location>
    <ligand>
        <name>acetyl-CoA</name>
        <dbReference type="ChEBI" id="CHEBI:57288"/>
    </ligand>
</feature>
<sequence length="454" mass="49023">MTTTVIILAAGKGTRMRSHLPKVLQPLAGRPLLGHVIQTAKQLNANNIITIFGHGGAQVQQQFQQENIQWVEQTEQLGTGHAVQMTLPVLPHDGLSLILYGDVPLVRQQTLEKLLAVSSTTGIGMITLRVEDPTGYGRIIRESDKIQAIVEHKDASEQQRQIQEINTGIYCVSNQKLHEWLPKLSNNNAQGEYYLTDIVAMAVADGLEIASIQPDLAFEVEGVNDRLQLAALEREFQLQQAKSLMQQGVTLTDPSRFDLRGTLKIGQDVRIDINVIIEGNCELGDFVEIGAGCVLKNTKIAAGTKVQPYSIFEDAVVGENTQIGPFARLRPGAHLAAEVHIGNFVEVKNTSIGVGSKANHFTYLGDAEVGAGSNIGAGTITCNYDGANKHKTVIGDAVFIGSNSSLVAPVSIGDGATVGAGSVITRNVPENTLAFERAQQIEKANYQRPQKLKK</sequence>
<reference key="1">
    <citation type="journal article" date="2004" name="Nucleic Acids Res.">
        <title>Unique features revealed by the genome sequence of Acinetobacter sp. ADP1, a versatile and naturally transformation competent bacterium.</title>
        <authorList>
            <person name="Barbe V."/>
            <person name="Vallenet D."/>
            <person name="Fonknechten N."/>
            <person name="Kreimeyer A."/>
            <person name="Oztas S."/>
            <person name="Labarre L."/>
            <person name="Cruveiller S."/>
            <person name="Robert C."/>
            <person name="Duprat S."/>
            <person name="Wincker P."/>
            <person name="Ornston L.N."/>
            <person name="Weissenbach J."/>
            <person name="Marliere P."/>
            <person name="Cohen G.N."/>
            <person name="Medigue C."/>
        </authorList>
    </citation>
    <scope>NUCLEOTIDE SEQUENCE [LARGE SCALE GENOMIC DNA]</scope>
    <source>
        <strain>ATCC 33305 / BD413 / ADP1</strain>
    </source>
</reference>
<organism>
    <name type="scientific">Acinetobacter baylyi (strain ATCC 33305 / BD413 / ADP1)</name>
    <dbReference type="NCBI Taxonomy" id="62977"/>
    <lineage>
        <taxon>Bacteria</taxon>
        <taxon>Pseudomonadati</taxon>
        <taxon>Pseudomonadota</taxon>
        <taxon>Gammaproteobacteria</taxon>
        <taxon>Moraxellales</taxon>
        <taxon>Moraxellaceae</taxon>
        <taxon>Acinetobacter</taxon>
    </lineage>
</organism>
<comment type="function">
    <text evidence="1">Catalyzes the last two sequential reactions in the de novo biosynthetic pathway for UDP-N-acetylglucosamine (UDP-GlcNAc). The C-terminal domain catalyzes the transfer of acetyl group from acetyl coenzyme A to glucosamine-1-phosphate (GlcN-1-P) to produce N-acetylglucosamine-1-phosphate (GlcNAc-1-P), which is converted into UDP-GlcNAc by the transfer of uridine 5-monophosphate (from uridine 5-triphosphate), a reaction catalyzed by the N-terminal domain.</text>
</comment>
<comment type="catalytic activity">
    <reaction evidence="1">
        <text>alpha-D-glucosamine 1-phosphate + acetyl-CoA = N-acetyl-alpha-D-glucosamine 1-phosphate + CoA + H(+)</text>
        <dbReference type="Rhea" id="RHEA:13725"/>
        <dbReference type="ChEBI" id="CHEBI:15378"/>
        <dbReference type="ChEBI" id="CHEBI:57287"/>
        <dbReference type="ChEBI" id="CHEBI:57288"/>
        <dbReference type="ChEBI" id="CHEBI:57776"/>
        <dbReference type="ChEBI" id="CHEBI:58516"/>
        <dbReference type="EC" id="2.3.1.157"/>
    </reaction>
</comment>
<comment type="catalytic activity">
    <reaction evidence="1">
        <text>N-acetyl-alpha-D-glucosamine 1-phosphate + UTP + H(+) = UDP-N-acetyl-alpha-D-glucosamine + diphosphate</text>
        <dbReference type="Rhea" id="RHEA:13509"/>
        <dbReference type="ChEBI" id="CHEBI:15378"/>
        <dbReference type="ChEBI" id="CHEBI:33019"/>
        <dbReference type="ChEBI" id="CHEBI:46398"/>
        <dbReference type="ChEBI" id="CHEBI:57705"/>
        <dbReference type="ChEBI" id="CHEBI:57776"/>
        <dbReference type="EC" id="2.7.7.23"/>
    </reaction>
</comment>
<comment type="cofactor">
    <cofactor evidence="1">
        <name>Mg(2+)</name>
        <dbReference type="ChEBI" id="CHEBI:18420"/>
    </cofactor>
    <text evidence="1">Binds 1 Mg(2+) ion per subunit.</text>
</comment>
<comment type="pathway">
    <text evidence="1">Nucleotide-sugar biosynthesis; UDP-N-acetyl-alpha-D-glucosamine biosynthesis; N-acetyl-alpha-D-glucosamine 1-phosphate from alpha-D-glucosamine 6-phosphate (route II): step 2/2.</text>
</comment>
<comment type="pathway">
    <text evidence="1">Nucleotide-sugar biosynthesis; UDP-N-acetyl-alpha-D-glucosamine biosynthesis; UDP-N-acetyl-alpha-D-glucosamine from N-acetyl-alpha-D-glucosamine 1-phosphate: step 1/1.</text>
</comment>
<comment type="pathway">
    <text evidence="1">Bacterial outer membrane biogenesis; LPS lipid A biosynthesis.</text>
</comment>
<comment type="subunit">
    <text evidence="1">Homotrimer.</text>
</comment>
<comment type="subcellular location">
    <subcellularLocation>
        <location evidence="1">Cytoplasm</location>
    </subcellularLocation>
</comment>
<comment type="similarity">
    <text evidence="1">In the N-terminal section; belongs to the N-acetylglucosamine-1-phosphate uridyltransferase family.</text>
</comment>
<comment type="similarity">
    <text evidence="1">In the C-terminal section; belongs to the transferase hexapeptide repeat family.</text>
</comment>
<keyword id="KW-0012">Acyltransferase</keyword>
<keyword id="KW-0133">Cell shape</keyword>
<keyword id="KW-0961">Cell wall biogenesis/degradation</keyword>
<keyword id="KW-0963">Cytoplasm</keyword>
<keyword id="KW-0460">Magnesium</keyword>
<keyword id="KW-0479">Metal-binding</keyword>
<keyword id="KW-0511">Multifunctional enzyme</keyword>
<keyword id="KW-0548">Nucleotidyltransferase</keyword>
<keyword id="KW-0573">Peptidoglycan synthesis</keyword>
<keyword id="KW-0677">Repeat</keyword>
<keyword id="KW-0808">Transferase</keyword>